<organism>
    <name type="scientific">Rhodopseudomonas palustris (strain ATCC BAA-98 / CGA009)</name>
    <dbReference type="NCBI Taxonomy" id="258594"/>
    <lineage>
        <taxon>Bacteria</taxon>
        <taxon>Pseudomonadati</taxon>
        <taxon>Pseudomonadota</taxon>
        <taxon>Alphaproteobacteria</taxon>
        <taxon>Hyphomicrobiales</taxon>
        <taxon>Nitrobacteraceae</taxon>
        <taxon>Rhodopseudomonas</taxon>
    </lineage>
</organism>
<protein>
    <recommendedName>
        <fullName evidence="1">Dihydroorotate dehydrogenase (quinone)</fullName>
        <ecNumber evidence="1">1.3.5.2</ecNumber>
    </recommendedName>
    <alternativeName>
        <fullName evidence="1">DHOdehase</fullName>
        <shortName evidence="1">DHOD</shortName>
        <shortName evidence="1">DHODase</shortName>
    </alternativeName>
    <alternativeName>
        <fullName evidence="1">Dihydroorotate oxidase</fullName>
    </alternativeName>
</protein>
<evidence type="ECO:0000255" key="1">
    <source>
        <dbReference type="HAMAP-Rule" id="MF_00225"/>
    </source>
</evidence>
<comment type="function">
    <text evidence="1">Catalyzes the conversion of dihydroorotate to orotate with quinone as electron acceptor.</text>
</comment>
<comment type="catalytic activity">
    <reaction evidence="1">
        <text>(S)-dihydroorotate + a quinone = orotate + a quinol</text>
        <dbReference type="Rhea" id="RHEA:30187"/>
        <dbReference type="ChEBI" id="CHEBI:24646"/>
        <dbReference type="ChEBI" id="CHEBI:30839"/>
        <dbReference type="ChEBI" id="CHEBI:30864"/>
        <dbReference type="ChEBI" id="CHEBI:132124"/>
        <dbReference type="EC" id="1.3.5.2"/>
    </reaction>
</comment>
<comment type="cofactor">
    <cofactor evidence="1">
        <name>FMN</name>
        <dbReference type="ChEBI" id="CHEBI:58210"/>
    </cofactor>
    <text evidence="1">Binds 1 FMN per subunit.</text>
</comment>
<comment type="pathway">
    <text evidence="1">Pyrimidine metabolism; UMP biosynthesis via de novo pathway; orotate from (S)-dihydroorotate (quinone route): step 1/1.</text>
</comment>
<comment type="subunit">
    <text evidence="1">Monomer.</text>
</comment>
<comment type="subcellular location">
    <subcellularLocation>
        <location evidence="1">Cell membrane</location>
        <topology evidence="1">Peripheral membrane protein</topology>
    </subcellularLocation>
</comment>
<comment type="similarity">
    <text evidence="1">Belongs to the dihydroorotate dehydrogenase family. Type 2 subfamily.</text>
</comment>
<name>PYRD_RHOPA</name>
<proteinExistence type="inferred from homology"/>
<accession>Q6NBN1</accession>
<gene>
    <name evidence="1" type="primary">pyrD</name>
    <name type="ordered locus">RPA0797</name>
</gene>
<feature type="chain" id="PRO_1000100279" description="Dihydroorotate dehydrogenase (quinone)">
    <location>
        <begin position="1"/>
        <end position="364"/>
    </location>
</feature>
<feature type="active site" description="Nucleophile" evidence="1">
    <location>
        <position position="173"/>
    </location>
</feature>
<feature type="binding site" evidence="1">
    <location>
        <begin position="61"/>
        <end position="65"/>
    </location>
    <ligand>
        <name>FMN</name>
        <dbReference type="ChEBI" id="CHEBI:58210"/>
    </ligand>
</feature>
<feature type="binding site" evidence="1">
    <location>
        <position position="65"/>
    </location>
    <ligand>
        <name>substrate</name>
    </ligand>
</feature>
<feature type="binding site" evidence="1">
    <location>
        <position position="85"/>
    </location>
    <ligand>
        <name>FMN</name>
        <dbReference type="ChEBI" id="CHEBI:58210"/>
    </ligand>
</feature>
<feature type="binding site" evidence="1">
    <location>
        <begin position="110"/>
        <end position="114"/>
    </location>
    <ligand>
        <name>substrate</name>
    </ligand>
</feature>
<feature type="binding site" evidence="1">
    <location>
        <position position="139"/>
    </location>
    <ligand>
        <name>FMN</name>
        <dbReference type="ChEBI" id="CHEBI:58210"/>
    </ligand>
</feature>
<feature type="binding site" evidence="1">
    <location>
        <position position="170"/>
    </location>
    <ligand>
        <name>FMN</name>
        <dbReference type="ChEBI" id="CHEBI:58210"/>
    </ligand>
</feature>
<feature type="binding site" evidence="1">
    <location>
        <position position="170"/>
    </location>
    <ligand>
        <name>substrate</name>
    </ligand>
</feature>
<feature type="binding site" evidence="1">
    <location>
        <position position="175"/>
    </location>
    <ligand>
        <name>substrate</name>
    </ligand>
</feature>
<feature type="binding site" evidence="1">
    <location>
        <position position="214"/>
    </location>
    <ligand>
        <name>FMN</name>
        <dbReference type="ChEBI" id="CHEBI:58210"/>
    </ligand>
</feature>
<feature type="binding site" evidence="1">
    <location>
        <position position="242"/>
    </location>
    <ligand>
        <name>FMN</name>
        <dbReference type="ChEBI" id="CHEBI:58210"/>
    </ligand>
</feature>
<feature type="binding site" evidence="1">
    <location>
        <begin position="243"/>
        <end position="244"/>
    </location>
    <ligand>
        <name>substrate</name>
    </ligand>
</feature>
<feature type="binding site" evidence="1">
    <location>
        <position position="266"/>
    </location>
    <ligand>
        <name>FMN</name>
        <dbReference type="ChEBI" id="CHEBI:58210"/>
    </ligand>
</feature>
<feature type="binding site" evidence="1">
    <location>
        <position position="295"/>
    </location>
    <ligand>
        <name>FMN</name>
        <dbReference type="ChEBI" id="CHEBI:58210"/>
    </ligand>
</feature>
<feature type="binding site" evidence="1">
    <location>
        <begin position="316"/>
        <end position="317"/>
    </location>
    <ligand>
        <name>FMN</name>
        <dbReference type="ChEBI" id="CHEBI:58210"/>
    </ligand>
</feature>
<sequence length="364" mass="39178">MIRAFDAVSLPLLRWLDPEDAHRLAIQGLKLWPPVKPRPDDSKLAVRAFGLNFSNPVGIAAGFDKNAEAPDALLRLGFGFVEVGTVTPKPQAGNPRPRLFRLERDEAVINRMGFNNEGAEVVLRRLAARAQYGGIVGVNVGANKDSDDRVADYVKLIETFAPLASYFTVNVSSPNTPGLRNLQQAAALDDLLARVIDARERVRAAAGDTPVLLKIAPDLSLGELDDVVHIARSRRVDGMIVANTTLSRSPTLRERTKMNEQGGLSGRPLFRLSTRMVAETFVRAEGAFPLIGVGGIDSGGAALTKIRAGATLVQLYSALVYKGLGLVESIKADLASTLLRTDRDSLAEIVGADAPMITAEEWPV</sequence>
<keyword id="KW-1003">Cell membrane</keyword>
<keyword id="KW-0285">Flavoprotein</keyword>
<keyword id="KW-0288">FMN</keyword>
<keyword id="KW-0472">Membrane</keyword>
<keyword id="KW-0560">Oxidoreductase</keyword>
<keyword id="KW-0665">Pyrimidine biosynthesis</keyword>
<dbReference type="EC" id="1.3.5.2" evidence="1"/>
<dbReference type="EMBL" id="BX572595">
    <property type="protein sequence ID" value="CAE26241.1"/>
    <property type="molecule type" value="Genomic_DNA"/>
</dbReference>
<dbReference type="RefSeq" id="WP_011156364.1">
    <property type="nucleotide sequence ID" value="NZ_CP116810.1"/>
</dbReference>
<dbReference type="SMR" id="Q6NBN1"/>
<dbReference type="STRING" id="258594.RPA0797"/>
<dbReference type="GeneID" id="66891813"/>
<dbReference type="eggNOG" id="COG0167">
    <property type="taxonomic scope" value="Bacteria"/>
</dbReference>
<dbReference type="HOGENOM" id="CLU_013640_2_1_5"/>
<dbReference type="PhylomeDB" id="Q6NBN1"/>
<dbReference type="UniPathway" id="UPA00070">
    <property type="reaction ID" value="UER00946"/>
</dbReference>
<dbReference type="GO" id="GO:0005737">
    <property type="term" value="C:cytoplasm"/>
    <property type="evidence" value="ECO:0007669"/>
    <property type="project" value="InterPro"/>
</dbReference>
<dbReference type="GO" id="GO:0005886">
    <property type="term" value="C:plasma membrane"/>
    <property type="evidence" value="ECO:0007669"/>
    <property type="project" value="UniProtKB-SubCell"/>
</dbReference>
<dbReference type="GO" id="GO:0106430">
    <property type="term" value="F:dihydroorotate dehydrogenase (quinone) activity"/>
    <property type="evidence" value="ECO:0007669"/>
    <property type="project" value="UniProtKB-EC"/>
</dbReference>
<dbReference type="GO" id="GO:0006207">
    <property type="term" value="P:'de novo' pyrimidine nucleobase biosynthetic process"/>
    <property type="evidence" value="ECO:0007669"/>
    <property type="project" value="InterPro"/>
</dbReference>
<dbReference type="GO" id="GO:0044205">
    <property type="term" value="P:'de novo' UMP biosynthetic process"/>
    <property type="evidence" value="ECO:0007669"/>
    <property type="project" value="UniProtKB-UniRule"/>
</dbReference>
<dbReference type="CDD" id="cd04738">
    <property type="entry name" value="DHOD_2_like"/>
    <property type="match status" value="1"/>
</dbReference>
<dbReference type="Gene3D" id="3.20.20.70">
    <property type="entry name" value="Aldolase class I"/>
    <property type="match status" value="1"/>
</dbReference>
<dbReference type="HAMAP" id="MF_00225">
    <property type="entry name" value="DHO_dh_type2"/>
    <property type="match status" value="1"/>
</dbReference>
<dbReference type="InterPro" id="IPR013785">
    <property type="entry name" value="Aldolase_TIM"/>
</dbReference>
<dbReference type="InterPro" id="IPR050074">
    <property type="entry name" value="DHO_dehydrogenase"/>
</dbReference>
<dbReference type="InterPro" id="IPR005719">
    <property type="entry name" value="Dihydroorotate_DH_2"/>
</dbReference>
<dbReference type="InterPro" id="IPR005720">
    <property type="entry name" value="Dihydroorotate_DH_cat"/>
</dbReference>
<dbReference type="InterPro" id="IPR001295">
    <property type="entry name" value="Dihydroorotate_DH_CS"/>
</dbReference>
<dbReference type="NCBIfam" id="NF003645">
    <property type="entry name" value="PRK05286.1-2"/>
    <property type="match status" value="1"/>
</dbReference>
<dbReference type="NCBIfam" id="NF003652">
    <property type="entry name" value="PRK05286.2-5"/>
    <property type="match status" value="1"/>
</dbReference>
<dbReference type="NCBIfam" id="TIGR01036">
    <property type="entry name" value="pyrD_sub2"/>
    <property type="match status" value="1"/>
</dbReference>
<dbReference type="PANTHER" id="PTHR48109:SF4">
    <property type="entry name" value="DIHYDROOROTATE DEHYDROGENASE (QUINONE), MITOCHONDRIAL"/>
    <property type="match status" value="1"/>
</dbReference>
<dbReference type="PANTHER" id="PTHR48109">
    <property type="entry name" value="DIHYDROOROTATE DEHYDROGENASE (QUINONE), MITOCHONDRIAL-RELATED"/>
    <property type="match status" value="1"/>
</dbReference>
<dbReference type="Pfam" id="PF01180">
    <property type="entry name" value="DHO_dh"/>
    <property type="match status" value="1"/>
</dbReference>
<dbReference type="SUPFAM" id="SSF51395">
    <property type="entry name" value="FMN-linked oxidoreductases"/>
    <property type="match status" value="1"/>
</dbReference>
<dbReference type="PROSITE" id="PS00911">
    <property type="entry name" value="DHODEHASE_1"/>
    <property type="match status" value="1"/>
</dbReference>
<dbReference type="PROSITE" id="PS00912">
    <property type="entry name" value="DHODEHASE_2"/>
    <property type="match status" value="1"/>
</dbReference>
<reference key="1">
    <citation type="journal article" date="2004" name="Nat. Biotechnol.">
        <title>Complete genome sequence of the metabolically versatile photosynthetic bacterium Rhodopseudomonas palustris.</title>
        <authorList>
            <person name="Larimer F.W."/>
            <person name="Chain P."/>
            <person name="Hauser L."/>
            <person name="Lamerdin J.E."/>
            <person name="Malfatti S."/>
            <person name="Do L."/>
            <person name="Land M.L."/>
            <person name="Pelletier D.A."/>
            <person name="Beatty J.T."/>
            <person name="Lang A.S."/>
            <person name="Tabita F.R."/>
            <person name="Gibson J.L."/>
            <person name="Hanson T.E."/>
            <person name="Bobst C."/>
            <person name="Torres y Torres J.L."/>
            <person name="Peres C."/>
            <person name="Harrison F.H."/>
            <person name="Gibson J."/>
            <person name="Harwood C.S."/>
        </authorList>
    </citation>
    <scope>NUCLEOTIDE SEQUENCE [LARGE SCALE GENOMIC DNA]</scope>
    <source>
        <strain>ATCC BAA-98 / CGA009</strain>
    </source>
</reference>